<feature type="chain" id="PRO_1000018254" description="Tryptophan synthase alpha chain">
    <location>
        <begin position="1"/>
        <end position="269"/>
    </location>
</feature>
<feature type="active site" description="Proton acceptor" evidence="1">
    <location>
        <position position="49"/>
    </location>
</feature>
<feature type="active site" description="Proton acceptor" evidence="1">
    <location>
        <position position="60"/>
    </location>
</feature>
<organism>
    <name type="scientific">Pseudomonas entomophila (strain L48)</name>
    <dbReference type="NCBI Taxonomy" id="384676"/>
    <lineage>
        <taxon>Bacteria</taxon>
        <taxon>Pseudomonadati</taxon>
        <taxon>Pseudomonadota</taxon>
        <taxon>Gammaproteobacteria</taxon>
        <taxon>Pseudomonadales</taxon>
        <taxon>Pseudomonadaceae</taxon>
        <taxon>Pseudomonas</taxon>
    </lineage>
</organism>
<name>TRPA_PSEE4</name>
<gene>
    <name evidence="1" type="primary">trpA</name>
    <name type="ordered locus">PSEEN0037</name>
</gene>
<proteinExistence type="inferred from homology"/>
<dbReference type="EC" id="4.2.1.20" evidence="1"/>
<dbReference type="EMBL" id="CT573326">
    <property type="protein sequence ID" value="CAK13031.1"/>
    <property type="molecule type" value="Genomic_DNA"/>
</dbReference>
<dbReference type="RefSeq" id="WP_011531492.1">
    <property type="nucleotide sequence ID" value="NC_008027.1"/>
</dbReference>
<dbReference type="SMR" id="Q1IH21"/>
<dbReference type="STRING" id="384676.PSEEN0037"/>
<dbReference type="GeneID" id="32803405"/>
<dbReference type="KEGG" id="pen:PSEEN0037"/>
<dbReference type="eggNOG" id="COG0159">
    <property type="taxonomic scope" value="Bacteria"/>
</dbReference>
<dbReference type="HOGENOM" id="CLU_016734_0_4_6"/>
<dbReference type="OrthoDB" id="9804578at2"/>
<dbReference type="UniPathway" id="UPA00035">
    <property type="reaction ID" value="UER00044"/>
</dbReference>
<dbReference type="Proteomes" id="UP000000658">
    <property type="component" value="Chromosome"/>
</dbReference>
<dbReference type="GO" id="GO:0005829">
    <property type="term" value="C:cytosol"/>
    <property type="evidence" value="ECO:0007669"/>
    <property type="project" value="TreeGrafter"/>
</dbReference>
<dbReference type="GO" id="GO:0004834">
    <property type="term" value="F:tryptophan synthase activity"/>
    <property type="evidence" value="ECO:0007669"/>
    <property type="project" value="UniProtKB-UniRule"/>
</dbReference>
<dbReference type="CDD" id="cd04724">
    <property type="entry name" value="Tryptophan_synthase_alpha"/>
    <property type="match status" value="1"/>
</dbReference>
<dbReference type="FunFam" id="3.20.20.70:FF:000037">
    <property type="entry name" value="Tryptophan synthase alpha chain"/>
    <property type="match status" value="1"/>
</dbReference>
<dbReference type="Gene3D" id="3.20.20.70">
    <property type="entry name" value="Aldolase class I"/>
    <property type="match status" value="1"/>
</dbReference>
<dbReference type="HAMAP" id="MF_00131">
    <property type="entry name" value="Trp_synth_alpha"/>
    <property type="match status" value="1"/>
</dbReference>
<dbReference type="InterPro" id="IPR013785">
    <property type="entry name" value="Aldolase_TIM"/>
</dbReference>
<dbReference type="InterPro" id="IPR011060">
    <property type="entry name" value="RibuloseP-bd_barrel"/>
</dbReference>
<dbReference type="InterPro" id="IPR018204">
    <property type="entry name" value="Trp_synthase_alpha_AS"/>
</dbReference>
<dbReference type="InterPro" id="IPR002028">
    <property type="entry name" value="Trp_synthase_suA"/>
</dbReference>
<dbReference type="NCBIfam" id="TIGR00262">
    <property type="entry name" value="trpA"/>
    <property type="match status" value="1"/>
</dbReference>
<dbReference type="PANTHER" id="PTHR43406:SF1">
    <property type="entry name" value="TRYPTOPHAN SYNTHASE ALPHA CHAIN, CHLOROPLASTIC"/>
    <property type="match status" value="1"/>
</dbReference>
<dbReference type="PANTHER" id="PTHR43406">
    <property type="entry name" value="TRYPTOPHAN SYNTHASE, ALPHA CHAIN"/>
    <property type="match status" value="1"/>
</dbReference>
<dbReference type="Pfam" id="PF00290">
    <property type="entry name" value="Trp_syntA"/>
    <property type="match status" value="1"/>
</dbReference>
<dbReference type="SUPFAM" id="SSF51366">
    <property type="entry name" value="Ribulose-phoshate binding barrel"/>
    <property type="match status" value="1"/>
</dbReference>
<dbReference type="PROSITE" id="PS00167">
    <property type="entry name" value="TRP_SYNTHASE_ALPHA"/>
    <property type="match status" value="1"/>
</dbReference>
<sequence>MSRLEQRFAELKAEGRSALVTFVTAGDPGYDASLEILKGLPAAGADVIELGMPFTDPMADGVAIQLATLRALEAGQTLAKTLQMVREFRVGNQTTPIVLMGYYNPIHRFGVEQFVAEAKEAGVDGLIIVDLPPEHDAELATPAQAAGIDFIRLTTPTTDDARLPRVLERSSGFVYYVSVAGVTGAGSATTEHVTEAIARLRRHTDLPISVGFGIRTPEQAAAIARLADGVVVGSALVDKIAQAKDAGQAVKDVLSLCSALADGVRAARV</sequence>
<protein>
    <recommendedName>
        <fullName evidence="1">Tryptophan synthase alpha chain</fullName>
        <ecNumber evidence="1">4.2.1.20</ecNumber>
    </recommendedName>
</protein>
<keyword id="KW-0028">Amino-acid biosynthesis</keyword>
<keyword id="KW-0057">Aromatic amino acid biosynthesis</keyword>
<keyword id="KW-0456">Lyase</keyword>
<keyword id="KW-0822">Tryptophan biosynthesis</keyword>
<accession>Q1IH21</accession>
<reference key="1">
    <citation type="journal article" date="2006" name="Nat. Biotechnol.">
        <title>Complete genome sequence of the entomopathogenic and metabolically versatile soil bacterium Pseudomonas entomophila.</title>
        <authorList>
            <person name="Vodovar N."/>
            <person name="Vallenet D."/>
            <person name="Cruveiller S."/>
            <person name="Rouy Z."/>
            <person name="Barbe V."/>
            <person name="Acosta C."/>
            <person name="Cattolico L."/>
            <person name="Jubin C."/>
            <person name="Lajus A."/>
            <person name="Segurens B."/>
            <person name="Vacherie B."/>
            <person name="Wincker P."/>
            <person name="Weissenbach J."/>
            <person name="Lemaitre B."/>
            <person name="Medigue C."/>
            <person name="Boccard F."/>
        </authorList>
    </citation>
    <scope>NUCLEOTIDE SEQUENCE [LARGE SCALE GENOMIC DNA]</scope>
    <source>
        <strain>L48</strain>
    </source>
</reference>
<comment type="function">
    <text evidence="1">The alpha subunit is responsible for the aldol cleavage of indoleglycerol phosphate to indole and glyceraldehyde 3-phosphate.</text>
</comment>
<comment type="catalytic activity">
    <reaction evidence="1">
        <text>(1S,2R)-1-C-(indol-3-yl)glycerol 3-phosphate + L-serine = D-glyceraldehyde 3-phosphate + L-tryptophan + H2O</text>
        <dbReference type="Rhea" id="RHEA:10532"/>
        <dbReference type="ChEBI" id="CHEBI:15377"/>
        <dbReference type="ChEBI" id="CHEBI:33384"/>
        <dbReference type="ChEBI" id="CHEBI:57912"/>
        <dbReference type="ChEBI" id="CHEBI:58866"/>
        <dbReference type="ChEBI" id="CHEBI:59776"/>
        <dbReference type="EC" id="4.2.1.20"/>
    </reaction>
</comment>
<comment type="pathway">
    <text evidence="1">Amino-acid biosynthesis; L-tryptophan biosynthesis; L-tryptophan from chorismate: step 5/5.</text>
</comment>
<comment type="subunit">
    <text evidence="1">Tetramer of two alpha and two beta chains.</text>
</comment>
<comment type="similarity">
    <text evidence="1">Belongs to the TrpA family.</text>
</comment>
<evidence type="ECO:0000255" key="1">
    <source>
        <dbReference type="HAMAP-Rule" id="MF_00131"/>
    </source>
</evidence>